<keyword id="KW-0687">Ribonucleoprotein</keyword>
<keyword id="KW-0689">Ribosomal protein</keyword>
<keyword id="KW-0694">RNA-binding</keyword>
<keyword id="KW-0699">rRNA-binding</keyword>
<keyword id="KW-0820">tRNA-binding</keyword>
<dbReference type="EMBL" id="AP008232">
    <property type="protein sequence ID" value="BAE75541.1"/>
    <property type="molecule type" value="Genomic_DNA"/>
</dbReference>
<dbReference type="RefSeq" id="WP_011412076.1">
    <property type="nucleotide sequence ID" value="NC_007712.1"/>
</dbReference>
<dbReference type="SMR" id="Q2NQN4"/>
<dbReference type="STRING" id="343509.SG2266"/>
<dbReference type="KEGG" id="sgl:SG2266"/>
<dbReference type="eggNOG" id="COG0094">
    <property type="taxonomic scope" value="Bacteria"/>
</dbReference>
<dbReference type="HOGENOM" id="CLU_061015_2_1_6"/>
<dbReference type="OrthoDB" id="9806626at2"/>
<dbReference type="BioCyc" id="SGLO343509:SGP1_RS20780-MONOMER"/>
<dbReference type="Proteomes" id="UP000001932">
    <property type="component" value="Chromosome"/>
</dbReference>
<dbReference type="GO" id="GO:1990904">
    <property type="term" value="C:ribonucleoprotein complex"/>
    <property type="evidence" value="ECO:0007669"/>
    <property type="project" value="UniProtKB-KW"/>
</dbReference>
<dbReference type="GO" id="GO:0005840">
    <property type="term" value="C:ribosome"/>
    <property type="evidence" value="ECO:0007669"/>
    <property type="project" value="UniProtKB-KW"/>
</dbReference>
<dbReference type="GO" id="GO:0019843">
    <property type="term" value="F:rRNA binding"/>
    <property type="evidence" value="ECO:0007669"/>
    <property type="project" value="UniProtKB-UniRule"/>
</dbReference>
<dbReference type="GO" id="GO:0003735">
    <property type="term" value="F:structural constituent of ribosome"/>
    <property type="evidence" value="ECO:0007669"/>
    <property type="project" value="InterPro"/>
</dbReference>
<dbReference type="GO" id="GO:0000049">
    <property type="term" value="F:tRNA binding"/>
    <property type="evidence" value="ECO:0007669"/>
    <property type="project" value="UniProtKB-UniRule"/>
</dbReference>
<dbReference type="GO" id="GO:0006412">
    <property type="term" value="P:translation"/>
    <property type="evidence" value="ECO:0007669"/>
    <property type="project" value="UniProtKB-UniRule"/>
</dbReference>
<dbReference type="FunFam" id="3.30.1440.10:FF:000001">
    <property type="entry name" value="50S ribosomal protein L5"/>
    <property type="match status" value="1"/>
</dbReference>
<dbReference type="Gene3D" id="3.30.1440.10">
    <property type="match status" value="1"/>
</dbReference>
<dbReference type="HAMAP" id="MF_01333_B">
    <property type="entry name" value="Ribosomal_uL5_B"/>
    <property type="match status" value="1"/>
</dbReference>
<dbReference type="InterPro" id="IPR002132">
    <property type="entry name" value="Ribosomal_uL5"/>
</dbReference>
<dbReference type="InterPro" id="IPR020930">
    <property type="entry name" value="Ribosomal_uL5_bac-type"/>
</dbReference>
<dbReference type="InterPro" id="IPR031309">
    <property type="entry name" value="Ribosomal_uL5_C"/>
</dbReference>
<dbReference type="InterPro" id="IPR020929">
    <property type="entry name" value="Ribosomal_uL5_CS"/>
</dbReference>
<dbReference type="InterPro" id="IPR022803">
    <property type="entry name" value="Ribosomal_uL5_dom_sf"/>
</dbReference>
<dbReference type="InterPro" id="IPR031310">
    <property type="entry name" value="Ribosomal_uL5_N"/>
</dbReference>
<dbReference type="NCBIfam" id="NF000585">
    <property type="entry name" value="PRK00010.1"/>
    <property type="match status" value="1"/>
</dbReference>
<dbReference type="PANTHER" id="PTHR11994">
    <property type="entry name" value="60S RIBOSOMAL PROTEIN L11-RELATED"/>
    <property type="match status" value="1"/>
</dbReference>
<dbReference type="Pfam" id="PF00281">
    <property type="entry name" value="Ribosomal_L5"/>
    <property type="match status" value="1"/>
</dbReference>
<dbReference type="Pfam" id="PF00673">
    <property type="entry name" value="Ribosomal_L5_C"/>
    <property type="match status" value="1"/>
</dbReference>
<dbReference type="PIRSF" id="PIRSF002161">
    <property type="entry name" value="Ribosomal_L5"/>
    <property type="match status" value="1"/>
</dbReference>
<dbReference type="SUPFAM" id="SSF55282">
    <property type="entry name" value="RL5-like"/>
    <property type="match status" value="1"/>
</dbReference>
<dbReference type="PROSITE" id="PS00358">
    <property type="entry name" value="RIBOSOMAL_L5"/>
    <property type="match status" value="1"/>
</dbReference>
<sequence length="179" mass="20240">MAKLHDYYKDEAVSQLMKQFGYHSVMQVPRVEKITLNMGVGEAIADKKLLDNAAADLTAISGQKPLITKARKSVAGFKIRQGYPIGCKVTLRGERMWEFFDRLISIAVPRIRDFRGLSAKSFDGRGNYSMGVHEQIIFPEIDYDKVDRVRGMDITITTTAKSDDEGRALLTAFNFPFRK</sequence>
<reference key="1">
    <citation type="journal article" date="2006" name="Genome Res.">
        <title>Massive genome erosion and functional adaptations provide insights into the symbiotic lifestyle of Sodalis glossinidius in the tsetse host.</title>
        <authorList>
            <person name="Toh H."/>
            <person name="Weiss B.L."/>
            <person name="Perkin S.A.H."/>
            <person name="Yamashita A."/>
            <person name="Oshima K."/>
            <person name="Hattori M."/>
            <person name="Aksoy S."/>
        </authorList>
    </citation>
    <scope>NUCLEOTIDE SEQUENCE [LARGE SCALE GENOMIC DNA]</scope>
    <source>
        <strain>morsitans</strain>
    </source>
</reference>
<organism>
    <name type="scientific">Sodalis glossinidius (strain morsitans)</name>
    <dbReference type="NCBI Taxonomy" id="343509"/>
    <lineage>
        <taxon>Bacteria</taxon>
        <taxon>Pseudomonadati</taxon>
        <taxon>Pseudomonadota</taxon>
        <taxon>Gammaproteobacteria</taxon>
        <taxon>Enterobacterales</taxon>
        <taxon>Bruguierivoracaceae</taxon>
        <taxon>Sodalis</taxon>
    </lineage>
</organism>
<feature type="chain" id="PRO_0000243066" description="Large ribosomal subunit protein uL5">
    <location>
        <begin position="1"/>
        <end position="179"/>
    </location>
</feature>
<gene>
    <name evidence="1" type="primary">rplE</name>
    <name type="ordered locus">SG2266</name>
</gene>
<comment type="function">
    <text evidence="1">This is one of the proteins that bind and probably mediate the attachment of the 5S RNA into the large ribosomal subunit, where it forms part of the central protuberance. In the 70S ribosome it contacts protein S13 of the 30S subunit (bridge B1b), connecting the 2 subunits; this bridge is implicated in subunit movement. Contacts the P site tRNA; the 5S rRNA and some of its associated proteins might help stabilize positioning of ribosome-bound tRNAs.</text>
</comment>
<comment type="subunit">
    <text evidence="1">Part of the 50S ribosomal subunit; part of the 5S rRNA/L5/L18/L25 subcomplex. Contacts the 5S rRNA and the P site tRNA. Forms a bridge to the 30S subunit in the 70S ribosome.</text>
</comment>
<comment type="similarity">
    <text evidence="1">Belongs to the universal ribosomal protein uL5 family.</text>
</comment>
<evidence type="ECO:0000255" key="1">
    <source>
        <dbReference type="HAMAP-Rule" id="MF_01333"/>
    </source>
</evidence>
<evidence type="ECO:0000305" key="2"/>
<accession>Q2NQN4</accession>
<proteinExistence type="inferred from homology"/>
<name>RL5_SODGM</name>
<protein>
    <recommendedName>
        <fullName evidence="1">Large ribosomal subunit protein uL5</fullName>
    </recommendedName>
    <alternativeName>
        <fullName evidence="2">50S ribosomal protein L5</fullName>
    </alternativeName>
</protein>